<keyword id="KW-0963">Cytoplasm</keyword>
<keyword id="KW-0489">Methyltransferase</keyword>
<keyword id="KW-1185">Reference proteome</keyword>
<keyword id="KW-0698">rRNA processing</keyword>
<keyword id="KW-0949">S-adenosyl-L-methionine</keyword>
<keyword id="KW-0808">Transferase</keyword>
<evidence type="ECO:0000255" key="1">
    <source>
        <dbReference type="HAMAP-Rule" id="MF_01547"/>
    </source>
</evidence>
<evidence type="ECO:0000256" key="2">
    <source>
        <dbReference type="SAM" id="MobiDB-lite"/>
    </source>
</evidence>
<organism>
    <name type="scientific">Anaeromyxobacter sp. (strain Fw109-5)</name>
    <dbReference type="NCBI Taxonomy" id="404589"/>
    <lineage>
        <taxon>Bacteria</taxon>
        <taxon>Pseudomonadati</taxon>
        <taxon>Myxococcota</taxon>
        <taxon>Myxococcia</taxon>
        <taxon>Myxococcales</taxon>
        <taxon>Cystobacterineae</taxon>
        <taxon>Anaeromyxobacteraceae</taxon>
        <taxon>Anaeromyxobacter</taxon>
    </lineage>
</organism>
<protein>
    <recommendedName>
        <fullName evidence="1">Ribosomal RNA large subunit methyltransferase E</fullName>
        <ecNumber evidence="1">2.1.1.166</ecNumber>
    </recommendedName>
    <alternativeName>
        <fullName evidence="1">23S rRNA Um2552 methyltransferase</fullName>
    </alternativeName>
    <alternativeName>
        <fullName evidence="1">rRNA (uridine-2'-O-)-methyltransferase</fullName>
    </alternativeName>
</protein>
<proteinExistence type="inferred from homology"/>
<reference key="1">
    <citation type="journal article" date="2015" name="Genome Announc.">
        <title>Complete genome sequence of Anaeromyxobacter sp. Fw109-5, an anaerobic, metal-reducing bacterium isolated from a contaminated subsurface environment.</title>
        <authorList>
            <person name="Hwang C."/>
            <person name="Copeland A."/>
            <person name="Lucas S."/>
            <person name="Lapidus A."/>
            <person name="Barry K."/>
            <person name="Glavina Del Rio T."/>
            <person name="Dalin E."/>
            <person name="Tice H."/>
            <person name="Pitluck S."/>
            <person name="Sims D."/>
            <person name="Brettin T."/>
            <person name="Bruce D.C."/>
            <person name="Detter J.C."/>
            <person name="Han C.S."/>
            <person name="Schmutz J."/>
            <person name="Larimer F.W."/>
            <person name="Land M.L."/>
            <person name="Hauser L.J."/>
            <person name="Kyrpides N."/>
            <person name="Lykidis A."/>
            <person name="Richardson P."/>
            <person name="Belieav A."/>
            <person name="Sanford R.A."/>
            <person name="Loeffler F.E."/>
            <person name="Fields M.W."/>
        </authorList>
    </citation>
    <scope>NUCLEOTIDE SEQUENCE [LARGE SCALE GENOMIC DNA]</scope>
    <source>
        <strain>Fw109-5</strain>
    </source>
</reference>
<dbReference type="EC" id="2.1.1.166" evidence="1"/>
<dbReference type="EMBL" id="CP000769">
    <property type="protein sequence ID" value="ABS25301.1"/>
    <property type="molecule type" value="Genomic_DNA"/>
</dbReference>
<dbReference type="SMR" id="A7H9A5"/>
<dbReference type="STRING" id="404589.Anae109_1093"/>
<dbReference type="KEGG" id="afw:Anae109_1093"/>
<dbReference type="eggNOG" id="COG0293">
    <property type="taxonomic scope" value="Bacteria"/>
</dbReference>
<dbReference type="HOGENOM" id="CLU_009422_3_0_7"/>
<dbReference type="OrthoDB" id="9790080at2"/>
<dbReference type="Proteomes" id="UP000006382">
    <property type="component" value="Chromosome"/>
</dbReference>
<dbReference type="GO" id="GO:0005737">
    <property type="term" value="C:cytoplasm"/>
    <property type="evidence" value="ECO:0007669"/>
    <property type="project" value="UniProtKB-SubCell"/>
</dbReference>
<dbReference type="GO" id="GO:0008650">
    <property type="term" value="F:rRNA (uridine-2'-O-)-methyltransferase activity"/>
    <property type="evidence" value="ECO:0007669"/>
    <property type="project" value="UniProtKB-UniRule"/>
</dbReference>
<dbReference type="Gene3D" id="3.40.50.150">
    <property type="entry name" value="Vaccinia Virus protein VP39"/>
    <property type="match status" value="1"/>
</dbReference>
<dbReference type="HAMAP" id="MF_01547">
    <property type="entry name" value="RNA_methyltr_E"/>
    <property type="match status" value="1"/>
</dbReference>
<dbReference type="InterPro" id="IPR050082">
    <property type="entry name" value="RNA_methyltr_RlmE"/>
</dbReference>
<dbReference type="InterPro" id="IPR002877">
    <property type="entry name" value="RNA_MeTrfase_FtsJ_dom"/>
</dbReference>
<dbReference type="InterPro" id="IPR015507">
    <property type="entry name" value="rRNA-MeTfrase_E"/>
</dbReference>
<dbReference type="InterPro" id="IPR029063">
    <property type="entry name" value="SAM-dependent_MTases_sf"/>
</dbReference>
<dbReference type="PANTHER" id="PTHR10920">
    <property type="entry name" value="RIBOSOMAL RNA METHYLTRANSFERASE"/>
    <property type="match status" value="1"/>
</dbReference>
<dbReference type="PANTHER" id="PTHR10920:SF18">
    <property type="entry name" value="RRNA METHYLTRANSFERASE 2, MITOCHONDRIAL"/>
    <property type="match status" value="1"/>
</dbReference>
<dbReference type="Pfam" id="PF01728">
    <property type="entry name" value="FtsJ"/>
    <property type="match status" value="1"/>
</dbReference>
<dbReference type="SUPFAM" id="SSF53335">
    <property type="entry name" value="S-adenosyl-L-methionine-dependent methyltransferases"/>
    <property type="match status" value="1"/>
</dbReference>
<feature type="chain" id="PRO_1000087670" description="Ribosomal RNA large subunit methyltransferase E">
    <location>
        <begin position="1"/>
        <end position="276"/>
    </location>
</feature>
<feature type="region of interest" description="Disordered" evidence="2">
    <location>
        <begin position="203"/>
        <end position="276"/>
    </location>
</feature>
<feature type="compositionally biased region" description="Low complexity" evidence="2">
    <location>
        <begin position="203"/>
        <end position="249"/>
    </location>
</feature>
<feature type="compositionally biased region" description="Basic residues" evidence="2">
    <location>
        <begin position="265"/>
        <end position="276"/>
    </location>
</feature>
<feature type="active site" description="Proton acceptor" evidence="1">
    <location>
        <position position="154"/>
    </location>
</feature>
<feature type="binding site" evidence="1">
    <location>
        <position position="52"/>
    </location>
    <ligand>
        <name>S-adenosyl-L-methionine</name>
        <dbReference type="ChEBI" id="CHEBI:59789"/>
    </ligand>
</feature>
<feature type="binding site" evidence="1">
    <location>
        <position position="54"/>
    </location>
    <ligand>
        <name>S-adenosyl-L-methionine</name>
        <dbReference type="ChEBI" id="CHEBI:59789"/>
    </ligand>
</feature>
<feature type="binding site" evidence="1">
    <location>
        <position position="72"/>
    </location>
    <ligand>
        <name>S-adenosyl-L-methionine</name>
        <dbReference type="ChEBI" id="CHEBI:59789"/>
    </ligand>
</feature>
<feature type="binding site" evidence="1">
    <location>
        <position position="90"/>
    </location>
    <ligand>
        <name>S-adenosyl-L-methionine</name>
        <dbReference type="ChEBI" id="CHEBI:59789"/>
    </ligand>
</feature>
<feature type="binding site" evidence="1">
    <location>
        <position position="114"/>
    </location>
    <ligand>
        <name>S-adenosyl-L-methionine</name>
        <dbReference type="ChEBI" id="CHEBI:59789"/>
    </ligand>
</feature>
<accession>A7H9A5</accession>
<sequence>MAKPYDPKDFYYRKAKKEGLRARSAFKIDEILRRHRLLRKGQAVLDLGAAPGGFLQILADEVGETGVAVGVDLEPVRRLGKPWVKTAIVDLLSPGALDQIRTLHAGPFQLVTSDMAPKTIGVKITDEARSLELVRMALDVAEKTLAPGGAFVAKVFMGGEFPVLKKELQARFDEVHVIRPEAVRESSYEVYVLGKGLRRAAARAAPTANATPTPTSTSTSTPTSTSTPTSTSTSTPAPTLTQTQTQTPKKPARRAPAKASTAGKAKAKTGASRRTR</sequence>
<name>RLME_ANADF</name>
<comment type="function">
    <text evidence="1">Specifically methylates the uridine in position 2552 of 23S rRNA at the 2'-O position of the ribose in the fully assembled 50S ribosomal subunit.</text>
</comment>
<comment type="catalytic activity">
    <reaction evidence="1">
        <text>uridine(2552) in 23S rRNA + S-adenosyl-L-methionine = 2'-O-methyluridine(2552) in 23S rRNA + S-adenosyl-L-homocysteine + H(+)</text>
        <dbReference type="Rhea" id="RHEA:42720"/>
        <dbReference type="Rhea" id="RHEA-COMP:10202"/>
        <dbReference type="Rhea" id="RHEA-COMP:10203"/>
        <dbReference type="ChEBI" id="CHEBI:15378"/>
        <dbReference type="ChEBI" id="CHEBI:57856"/>
        <dbReference type="ChEBI" id="CHEBI:59789"/>
        <dbReference type="ChEBI" id="CHEBI:65315"/>
        <dbReference type="ChEBI" id="CHEBI:74478"/>
        <dbReference type="EC" id="2.1.1.166"/>
    </reaction>
</comment>
<comment type="subcellular location">
    <subcellularLocation>
        <location evidence="1">Cytoplasm</location>
    </subcellularLocation>
</comment>
<comment type="similarity">
    <text evidence="1">Belongs to the class I-like SAM-binding methyltransferase superfamily. RNA methyltransferase RlmE family.</text>
</comment>
<gene>
    <name evidence="1" type="primary">rlmE</name>
    <name evidence="1" type="synonym">ftsJ</name>
    <name evidence="1" type="synonym">rrmJ</name>
    <name type="ordered locus">Anae109_1093</name>
</gene>